<feature type="chain" id="PRO_1000006438" description="Protein translation factor SUI1 homolog">
    <location>
        <begin position="1"/>
        <end position="101"/>
    </location>
</feature>
<comment type="similarity">
    <text evidence="1">Belongs to the SUI1 family.</text>
</comment>
<dbReference type="EMBL" id="CP000102">
    <property type="protein sequence ID" value="ABC57289.1"/>
    <property type="molecule type" value="Genomic_DNA"/>
</dbReference>
<dbReference type="SMR" id="Q2NFW4"/>
<dbReference type="STRING" id="339860.Msp_0901"/>
<dbReference type="KEGG" id="mst:Msp_0901"/>
<dbReference type="eggNOG" id="arCOG04223">
    <property type="taxonomic scope" value="Archaea"/>
</dbReference>
<dbReference type="HOGENOM" id="CLU_082805_6_1_2"/>
<dbReference type="OrthoDB" id="11182at2157"/>
<dbReference type="Proteomes" id="UP000001931">
    <property type="component" value="Chromosome"/>
</dbReference>
<dbReference type="GO" id="GO:0003729">
    <property type="term" value="F:mRNA binding"/>
    <property type="evidence" value="ECO:0007669"/>
    <property type="project" value="TreeGrafter"/>
</dbReference>
<dbReference type="GO" id="GO:0003743">
    <property type="term" value="F:translation initiation factor activity"/>
    <property type="evidence" value="ECO:0007669"/>
    <property type="project" value="InterPro"/>
</dbReference>
<dbReference type="GO" id="GO:0001731">
    <property type="term" value="P:formation of translation preinitiation complex"/>
    <property type="evidence" value="ECO:0007669"/>
    <property type="project" value="TreeGrafter"/>
</dbReference>
<dbReference type="GO" id="GO:0006417">
    <property type="term" value="P:regulation of translation"/>
    <property type="evidence" value="ECO:0007669"/>
    <property type="project" value="UniProtKB-UniRule"/>
</dbReference>
<dbReference type="GO" id="GO:0002188">
    <property type="term" value="P:translation reinitiation"/>
    <property type="evidence" value="ECO:0007669"/>
    <property type="project" value="TreeGrafter"/>
</dbReference>
<dbReference type="CDD" id="cd11567">
    <property type="entry name" value="YciH_like"/>
    <property type="match status" value="1"/>
</dbReference>
<dbReference type="Gene3D" id="3.30.780.10">
    <property type="entry name" value="SUI1-like domain"/>
    <property type="match status" value="1"/>
</dbReference>
<dbReference type="HAMAP" id="MF_00604">
    <property type="entry name" value="SUI1"/>
    <property type="match status" value="1"/>
</dbReference>
<dbReference type="InterPro" id="IPR050318">
    <property type="entry name" value="DENR/SUI1_TIF"/>
</dbReference>
<dbReference type="InterPro" id="IPR001950">
    <property type="entry name" value="SUI1"/>
</dbReference>
<dbReference type="InterPro" id="IPR022851">
    <property type="entry name" value="SUI1_arc"/>
</dbReference>
<dbReference type="InterPro" id="IPR005872">
    <property type="entry name" value="SUI1_arc_bac"/>
</dbReference>
<dbReference type="InterPro" id="IPR036877">
    <property type="entry name" value="SUI1_dom_sf"/>
</dbReference>
<dbReference type="NCBIfam" id="NF002096">
    <property type="entry name" value="PRK00939.1"/>
    <property type="match status" value="1"/>
</dbReference>
<dbReference type="NCBIfam" id="TIGR01158">
    <property type="entry name" value="SUI1_rel"/>
    <property type="match status" value="1"/>
</dbReference>
<dbReference type="PANTHER" id="PTHR12789:SF0">
    <property type="entry name" value="DENSITY-REGULATED PROTEIN"/>
    <property type="match status" value="1"/>
</dbReference>
<dbReference type="PANTHER" id="PTHR12789">
    <property type="entry name" value="DENSITY-REGULATED PROTEIN HOMOLOG"/>
    <property type="match status" value="1"/>
</dbReference>
<dbReference type="Pfam" id="PF01253">
    <property type="entry name" value="SUI1"/>
    <property type="match status" value="1"/>
</dbReference>
<dbReference type="PIRSF" id="PIRSF037511">
    <property type="entry name" value="Transl_init_SUI1_pro"/>
    <property type="match status" value="1"/>
</dbReference>
<dbReference type="SUPFAM" id="SSF55159">
    <property type="entry name" value="eIF1-like"/>
    <property type="match status" value="1"/>
</dbReference>
<dbReference type="PROSITE" id="PS50296">
    <property type="entry name" value="SUI1"/>
    <property type="match status" value="1"/>
</dbReference>
<proteinExistence type="inferred from homology"/>
<organism>
    <name type="scientific">Methanosphaera stadtmanae (strain ATCC 43021 / DSM 3091 / JCM 11832 / MCB-3)</name>
    <dbReference type="NCBI Taxonomy" id="339860"/>
    <lineage>
        <taxon>Archaea</taxon>
        <taxon>Methanobacteriati</taxon>
        <taxon>Methanobacteriota</taxon>
        <taxon>Methanomada group</taxon>
        <taxon>Methanobacteria</taxon>
        <taxon>Methanobacteriales</taxon>
        <taxon>Methanobacteriaceae</taxon>
        <taxon>Methanosphaera</taxon>
    </lineage>
</organism>
<sequence>MKICEICGLPKDLCVCEEIAREVQKVKVYTVRRRFGKLMTIVEGIDEHDIDIRELTKTLKSKCACGGTSKKGQIELQGDHKRKVKEVLAGMGFSSDTIEIK</sequence>
<name>SUI1_METST</name>
<accession>Q2NFW4</accession>
<evidence type="ECO:0000255" key="1">
    <source>
        <dbReference type="HAMAP-Rule" id="MF_00604"/>
    </source>
</evidence>
<keyword id="KW-0648">Protein biosynthesis</keyword>
<keyword id="KW-1185">Reference proteome</keyword>
<keyword id="KW-0810">Translation regulation</keyword>
<reference key="1">
    <citation type="journal article" date="2006" name="J. Bacteriol.">
        <title>The genome sequence of Methanosphaera stadtmanae reveals why this human intestinal archaeon is restricted to methanol and H2 for methane formation and ATP synthesis.</title>
        <authorList>
            <person name="Fricke W.F."/>
            <person name="Seedorf H."/>
            <person name="Henne A."/>
            <person name="Kruer M."/>
            <person name="Liesegang H."/>
            <person name="Hedderich R."/>
            <person name="Gottschalk G."/>
            <person name="Thauer R.K."/>
        </authorList>
    </citation>
    <scope>NUCLEOTIDE SEQUENCE [LARGE SCALE GENOMIC DNA]</scope>
    <source>
        <strain>ATCC 43021 / DSM 3091 / JCM 11832 / MCB-3</strain>
    </source>
</reference>
<protein>
    <recommendedName>
        <fullName evidence="1">Protein translation factor SUI1 homolog</fullName>
    </recommendedName>
</protein>
<gene>
    <name type="ordered locus">Msp_0901</name>
</gene>